<comment type="function">
    <text evidence="1">Involved in cell fusion during mating by stabilizing the plasma membrane fusion event.</text>
</comment>
<comment type="subcellular location">
    <subcellularLocation>
        <location evidence="1">Cell membrane</location>
        <topology evidence="1">Multi-pass membrane protein</topology>
    </subcellularLocation>
</comment>
<comment type="similarity">
    <text evidence="4">Belongs to the PRM1 family.</text>
</comment>
<organism>
    <name type="scientific">Coprinopsis cinerea (strain Okayama-7 / 130 / ATCC MYA-4618 / FGSC 9003)</name>
    <name type="common">Inky cap fungus</name>
    <name type="synonym">Hormographiella aspergillata</name>
    <dbReference type="NCBI Taxonomy" id="240176"/>
    <lineage>
        <taxon>Eukaryota</taxon>
        <taxon>Fungi</taxon>
        <taxon>Dikarya</taxon>
        <taxon>Basidiomycota</taxon>
        <taxon>Agaricomycotina</taxon>
        <taxon>Agaricomycetes</taxon>
        <taxon>Agaricomycetidae</taxon>
        <taxon>Agaricales</taxon>
        <taxon>Agaricineae</taxon>
        <taxon>Psathyrellaceae</taxon>
        <taxon>Coprinopsis</taxon>
    </lineage>
</organism>
<name>PRM1_COPC7</name>
<accession>A8N5E6</accession>
<proteinExistence type="inferred from homology"/>
<sequence>MSFLTTPPNEHTTLTSYLQLPHLLSLTWLAYPILSLIFVAFRLQASLASSEDAISSAKSNLLASCKAAEEAATSTASLPRYMAIATNQQVADAVNATLRGARAALILTLTVMEAIINFIIDLYRSIFLCFLELVVRGGIAILVGAVEEINNVLATVTSGLRTQIQASVGTLNNALRETIEGINRINPFGDIPVPTFDPPNLDGLDNVSLPDSFQESLLRLNDTIPTVSTIKEKLQDIIGTPFELVKRDINDTFAAVSFSADTLPVPEQNKVSFCSDLDLSVVDDVGNDIVKSAKIGIVILLVIALVLIGLNCLFTWYKWRCMQAHLEYTRQAWNTDPTMQTKGSISATPQIALSNHNLMVLQANSEHPLVTRITNQLSQKLRLSPRTHTHMQWFFNYIFHPPAAACLLIGVFGLLLIEIQLLAMGPLVNKYQEQAAETTKDFSLLIANSINESMLNQSTIYAAEINGRVDSVQTTINDGLFGWVDGTIVPLNTTINEFYDDIQNAVQTVFGGTILETAATEFIRCLIGSKVDAVENALTFLHENLRVDMPRVNDTALMLSPESVNEASAPIAAAAMGGGTDDDQGLIGRLVNSYADSLRKERVTFGIFLALWGVVVLMGLFVLFWHSTGKPLLEKRRRRKYEKSKGMLPEGGFVVPYRDGSAPPSRDEKNLGGGGNGGVGLAMTGDELPQFTPLPSPRRSAFKPFWNPAKPDASGEAKDVEKEPSPMAQVAADEVSKLKAFRLKLMGKSTESLDADSKASDNPPGLFGKVKGVFGKKDADQAPDYWTSYNASSDTVNANTARPNIRVIVDTDQDREDTYGNSFRHSADIEGADIYTPPPNSRWSTSPGPTKTSWNLKKLTLLSPKSSNNKKLPAVSGSSSIGPIPPSMSAAASGLKRQPSVPTDIGASFDDPFMASVSVPRKPSPIVPGIYPVPLHAAAPAINNNPYQRAPSPPKRFVAPYLNDPSALSRNTSGSSASKTHRRSSSHPAAVWRVTNAASTDRLTASPMSSQVSLPARMLTSENPFITPFDDEHRVEVVNPSRGEVRKSMAVNPFSNAAAVAI</sequence>
<evidence type="ECO:0000250" key="1"/>
<evidence type="ECO:0000255" key="2"/>
<evidence type="ECO:0000256" key="3">
    <source>
        <dbReference type="SAM" id="MobiDB-lite"/>
    </source>
</evidence>
<evidence type="ECO:0000305" key="4"/>
<gene>
    <name type="primary">PRM1</name>
    <name type="ORF">CC1G_04524</name>
</gene>
<protein>
    <recommendedName>
        <fullName>Plasma membrane fusion protein PRM1</fullName>
    </recommendedName>
</protein>
<dbReference type="EMBL" id="AACS02000003">
    <property type="protein sequence ID" value="EAU91756.1"/>
    <property type="molecule type" value="Genomic_DNA"/>
</dbReference>
<dbReference type="RefSeq" id="XP_001830091.1">
    <property type="nucleotide sequence ID" value="XM_001830039.1"/>
</dbReference>
<dbReference type="FunCoup" id="A8N5E6">
    <property type="interactions" value="2"/>
</dbReference>
<dbReference type="STRING" id="240176.A8N5E6"/>
<dbReference type="GlyCosmos" id="A8N5E6">
    <property type="glycosylation" value="7 sites, No reported glycans"/>
</dbReference>
<dbReference type="GeneID" id="6006529"/>
<dbReference type="KEGG" id="cci:CC1G_04524"/>
<dbReference type="VEuPathDB" id="FungiDB:CC1G_04524"/>
<dbReference type="eggNOG" id="ENOG502QRP5">
    <property type="taxonomic scope" value="Eukaryota"/>
</dbReference>
<dbReference type="HOGENOM" id="CLU_010191_0_0_1"/>
<dbReference type="InParanoid" id="A8N5E6"/>
<dbReference type="OMA" id="HSYGRDM"/>
<dbReference type="OrthoDB" id="10248838at2759"/>
<dbReference type="Proteomes" id="UP000001861">
    <property type="component" value="Unassembled WGS sequence"/>
</dbReference>
<dbReference type="GO" id="GO:0043332">
    <property type="term" value="C:mating projection tip"/>
    <property type="evidence" value="ECO:0007669"/>
    <property type="project" value="InterPro"/>
</dbReference>
<dbReference type="GO" id="GO:0005886">
    <property type="term" value="C:plasma membrane"/>
    <property type="evidence" value="ECO:0007669"/>
    <property type="project" value="UniProtKB-SubCell"/>
</dbReference>
<dbReference type="GO" id="GO:0032220">
    <property type="term" value="P:plasma membrane fusion involved in cytogamy"/>
    <property type="evidence" value="ECO:0007669"/>
    <property type="project" value="TreeGrafter"/>
</dbReference>
<dbReference type="InterPro" id="IPR026777">
    <property type="entry name" value="PRM1"/>
</dbReference>
<dbReference type="PANTHER" id="PTHR31030">
    <property type="entry name" value="PLASMA MEMBRANE FUSION PROTEIN PRM1"/>
    <property type="match status" value="1"/>
</dbReference>
<dbReference type="PANTHER" id="PTHR31030:SF1">
    <property type="entry name" value="PLASMA MEMBRANE FUSION PROTEIN PRM1"/>
    <property type="match status" value="1"/>
</dbReference>
<feature type="chain" id="PRO_0000337278" description="Plasma membrane fusion protein PRM1">
    <location>
        <begin position="1"/>
        <end position="1062"/>
    </location>
</feature>
<feature type="topological domain" description="Extracellular" evidence="1">
    <location>
        <begin position="1"/>
        <end position="20"/>
    </location>
</feature>
<feature type="transmembrane region" description="Helical" evidence="2">
    <location>
        <begin position="21"/>
        <end position="41"/>
    </location>
</feature>
<feature type="topological domain" description="Cytoplasmic" evidence="1">
    <location>
        <begin position="42"/>
        <end position="102"/>
    </location>
</feature>
<feature type="transmembrane region" description="Helical" evidence="2">
    <location>
        <begin position="103"/>
        <end position="123"/>
    </location>
</feature>
<feature type="topological domain" description="Extracellular" evidence="1">
    <location>
        <begin position="124"/>
        <end position="294"/>
    </location>
</feature>
<feature type="transmembrane region" description="Helical" evidence="2">
    <location>
        <begin position="295"/>
        <end position="315"/>
    </location>
</feature>
<feature type="topological domain" description="Cytoplasmic" evidence="1">
    <location>
        <begin position="316"/>
        <end position="396"/>
    </location>
</feature>
<feature type="transmembrane region" description="Helical" evidence="2">
    <location>
        <begin position="397"/>
        <end position="419"/>
    </location>
</feature>
<feature type="topological domain" description="Extracellular" evidence="1">
    <location>
        <begin position="420"/>
        <end position="604"/>
    </location>
</feature>
<feature type="transmembrane region" description="Helical" evidence="2">
    <location>
        <begin position="605"/>
        <end position="625"/>
    </location>
</feature>
<feature type="topological domain" description="Cytoplasmic" evidence="1">
    <location>
        <begin position="626"/>
        <end position="1062"/>
    </location>
</feature>
<feature type="region of interest" description="Disordered" evidence="3">
    <location>
        <begin position="652"/>
        <end position="675"/>
    </location>
</feature>
<feature type="region of interest" description="Disordered" evidence="3">
    <location>
        <begin position="830"/>
        <end position="850"/>
    </location>
</feature>
<feature type="region of interest" description="Disordered" evidence="3">
    <location>
        <begin position="960"/>
        <end position="991"/>
    </location>
</feature>
<feature type="compositionally biased region" description="Polar residues" evidence="3">
    <location>
        <begin position="841"/>
        <end position="850"/>
    </location>
</feature>
<feature type="glycosylation site" description="N-linked (GlcNAc...) asparagine" evidence="2">
    <location>
        <position position="206"/>
    </location>
</feature>
<feature type="glycosylation site" description="N-linked (GlcNAc...) asparagine" evidence="2">
    <location>
        <position position="221"/>
    </location>
</feature>
<feature type="glycosylation site" description="N-linked (GlcNAc...) asparagine" evidence="2">
    <location>
        <position position="250"/>
    </location>
</feature>
<feature type="glycosylation site" description="N-linked (GlcNAc...) asparagine" evidence="2">
    <location>
        <position position="451"/>
    </location>
</feature>
<feature type="glycosylation site" description="N-linked (GlcNAc...) asparagine" evidence="2">
    <location>
        <position position="456"/>
    </location>
</feature>
<feature type="glycosylation site" description="N-linked (GlcNAc...) asparagine" evidence="2">
    <location>
        <position position="492"/>
    </location>
</feature>
<feature type="glycosylation site" description="N-linked (GlcNAc...) asparagine" evidence="2">
    <location>
        <position position="553"/>
    </location>
</feature>
<reference key="1">
    <citation type="journal article" date="2010" name="Proc. Natl. Acad. Sci. U.S.A.">
        <title>Insights into evolution of multicellular fungi from the assembled chromosomes of the mushroom Coprinopsis cinerea (Coprinus cinereus).</title>
        <authorList>
            <person name="Stajich J.E."/>
            <person name="Wilke S.K."/>
            <person name="Ahren D."/>
            <person name="Au C.H."/>
            <person name="Birren B.W."/>
            <person name="Borodovsky M."/>
            <person name="Burns C."/>
            <person name="Canbaeck B."/>
            <person name="Casselton L.A."/>
            <person name="Cheng C.K."/>
            <person name="Deng J."/>
            <person name="Dietrich F.S."/>
            <person name="Fargo D.C."/>
            <person name="Farman M.L."/>
            <person name="Gathman A.C."/>
            <person name="Goldberg J."/>
            <person name="Guigo R."/>
            <person name="Hoegger P.J."/>
            <person name="Hooker J.B."/>
            <person name="Huggins A."/>
            <person name="James T.Y."/>
            <person name="Kamada T."/>
            <person name="Kilaru S."/>
            <person name="Kodira C."/>
            <person name="Kuees U."/>
            <person name="Kupfer D."/>
            <person name="Kwan H.S."/>
            <person name="Lomsadze A."/>
            <person name="Li W."/>
            <person name="Lilly W.W."/>
            <person name="Ma L.-J."/>
            <person name="Mackey A.J."/>
            <person name="Manning G."/>
            <person name="Martin F."/>
            <person name="Muraguchi H."/>
            <person name="Natvig D.O."/>
            <person name="Palmerini H."/>
            <person name="Ramesh M.A."/>
            <person name="Rehmeyer C.J."/>
            <person name="Roe B.A."/>
            <person name="Shenoy N."/>
            <person name="Stanke M."/>
            <person name="Ter-Hovhannisyan V."/>
            <person name="Tunlid A."/>
            <person name="Velagapudi R."/>
            <person name="Vision T.J."/>
            <person name="Zeng Q."/>
            <person name="Zolan M.E."/>
            <person name="Pukkila P.J."/>
        </authorList>
    </citation>
    <scope>NUCLEOTIDE SEQUENCE [LARGE SCALE GENOMIC DNA]</scope>
    <source>
        <strain>Okayama-7 / 130 / ATCC MYA-4618 / FGSC 9003</strain>
    </source>
</reference>
<keyword id="KW-1003">Cell membrane</keyword>
<keyword id="KW-0184">Conjugation</keyword>
<keyword id="KW-0325">Glycoprotein</keyword>
<keyword id="KW-0472">Membrane</keyword>
<keyword id="KW-1185">Reference proteome</keyword>
<keyword id="KW-0812">Transmembrane</keyword>
<keyword id="KW-1133">Transmembrane helix</keyword>